<reference key="1">
    <citation type="journal article" date="2004" name="J. Mol. Evol.">
        <title>Comparative analysis of the complete plastid genome sequence of the red alga Gracilaria tenuistipitata var. liui provides insights into the evolution of rhodoplasts and their relationship to other plastids.</title>
        <authorList>
            <person name="Hagopian J.C."/>
            <person name="Reis M."/>
            <person name="Kitajima J.P."/>
            <person name="Bhattacharya D."/>
            <person name="de Oliveira M.C."/>
        </authorList>
    </citation>
    <scope>NUCLEOTIDE SEQUENCE [LARGE SCALE GENOMIC DNA]</scope>
</reference>
<proteinExistence type="inferred from homology"/>
<name>RR10_GRATL</name>
<evidence type="ECO:0000255" key="1">
    <source>
        <dbReference type="HAMAP-Rule" id="MF_00508"/>
    </source>
</evidence>
<evidence type="ECO:0000305" key="2"/>
<gene>
    <name evidence="1" type="primary">rps10</name>
    <name type="ordered locus">Grc000073</name>
</gene>
<organism>
    <name type="scientific">Gracilaria tenuistipitata var. liui</name>
    <name type="common">Red alga</name>
    <dbReference type="NCBI Taxonomy" id="285951"/>
    <lineage>
        <taxon>Eukaryota</taxon>
        <taxon>Rhodophyta</taxon>
        <taxon>Florideophyceae</taxon>
        <taxon>Rhodymeniophycidae</taxon>
        <taxon>Gracilariales</taxon>
        <taxon>Gracilariaceae</taxon>
        <taxon>Gracilaria</taxon>
        <taxon>Gracilaria tenuistipitata</taxon>
    </lineage>
</organism>
<feature type="chain" id="PRO_0000146666" description="Small ribosomal subunit protein uS10c">
    <location>
        <begin position="1"/>
        <end position="105"/>
    </location>
</feature>
<geneLocation type="chloroplast"/>
<keyword id="KW-0150">Chloroplast</keyword>
<keyword id="KW-0934">Plastid</keyword>
<keyword id="KW-0687">Ribonucleoprotein</keyword>
<keyword id="KW-0689">Ribosomal protein</keyword>
<protein>
    <recommendedName>
        <fullName evidence="1">Small ribosomal subunit protein uS10c</fullName>
    </recommendedName>
    <alternativeName>
        <fullName evidence="2">30S ribosomal protein S10, chloroplastic</fullName>
    </alternativeName>
</protein>
<comment type="function">
    <text evidence="1">Involved in the binding of tRNA to the ribosomes.</text>
</comment>
<comment type="subunit">
    <text evidence="1">Part of the 30S ribosomal subunit.</text>
</comment>
<comment type="subcellular location">
    <subcellularLocation>
        <location evidence="1">Plastid</location>
        <location evidence="1">Chloroplast</location>
    </subcellularLocation>
</comment>
<comment type="similarity">
    <text evidence="1">Belongs to the universal ribosomal protein uS10 family.</text>
</comment>
<accession>Q6B8Y1</accession>
<dbReference type="EMBL" id="AY673996">
    <property type="protein sequence ID" value="AAT79654.1"/>
    <property type="molecule type" value="Genomic_DNA"/>
</dbReference>
<dbReference type="RefSeq" id="YP_063579.1">
    <property type="nucleotide sequence ID" value="NC_006137.1"/>
</dbReference>
<dbReference type="SMR" id="Q6B8Y1"/>
<dbReference type="GeneID" id="2944154"/>
<dbReference type="GO" id="GO:0009507">
    <property type="term" value="C:chloroplast"/>
    <property type="evidence" value="ECO:0007669"/>
    <property type="project" value="UniProtKB-SubCell"/>
</dbReference>
<dbReference type="GO" id="GO:1990904">
    <property type="term" value="C:ribonucleoprotein complex"/>
    <property type="evidence" value="ECO:0007669"/>
    <property type="project" value="UniProtKB-KW"/>
</dbReference>
<dbReference type="GO" id="GO:0005840">
    <property type="term" value="C:ribosome"/>
    <property type="evidence" value="ECO:0007669"/>
    <property type="project" value="UniProtKB-KW"/>
</dbReference>
<dbReference type="GO" id="GO:0003735">
    <property type="term" value="F:structural constituent of ribosome"/>
    <property type="evidence" value="ECO:0007669"/>
    <property type="project" value="InterPro"/>
</dbReference>
<dbReference type="GO" id="GO:0000049">
    <property type="term" value="F:tRNA binding"/>
    <property type="evidence" value="ECO:0007669"/>
    <property type="project" value="UniProtKB-UniRule"/>
</dbReference>
<dbReference type="GO" id="GO:0006412">
    <property type="term" value="P:translation"/>
    <property type="evidence" value="ECO:0007669"/>
    <property type="project" value="UniProtKB-UniRule"/>
</dbReference>
<dbReference type="FunFam" id="3.30.70.600:FF:000003">
    <property type="entry name" value="30S ribosomal protein S10"/>
    <property type="match status" value="1"/>
</dbReference>
<dbReference type="Gene3D" id="3.30.70.600">
    <property type="entry name" value="Ribosomal protein S10 domain"/>
    <property type="match status" value="1"/>
</dbReference>
<dbReference type="HAMAP" id="MF_00508">
    <property type="entry name" value="Ribosomal_uS10"/>
    <property type="match status" value="1"/>
</dbReference>
<dbReference type="InterPro" id="IPR001848">
    <property type="entry name" value="Ribosomal_uS10"/>
</dbReference>
<dbReference type="InterPro" id="IPR027486">
    <property type="entry name" value="Ribosomal_uS10_dom"/>
</dbReference>
<dbReference type="InterPro" id="IPR036838">
    <property type="entry name" value="Ribosomal_uS10_dom_sf"/>
</dbReference>
<dbReference type="NCBIfam" id="NF001861">
    <property type="entry name" value="PRK00596.1"/>
    <property type="match status" value="1"/>
</dbReference>
<dbReference type="NCBIfam" id="TIGR01049">
    <property type="entry name" value="rpsJ_bact"/>
    <property type="match status" value="1"/>
</dbReference>
<dbReference type="PANTHER" id="PTHR11700">
    <property type="entry name" value="30S RIBOSOMAL PROTEIN S10 FAMILY MEMBER"/>
    <property type="match status" value="1"/>
</dbReference>
<dbReference type="Pfam" id="PF00338">
    <property type="entry name" value="Ribosomal_S10"/>
    <property type="match status" value="1"/>
</dbReference>
<dbReference type="PRINTS" id="PR00971">
    <property type="entry name" value="RIBOSOMALS10"/>
</dbReference>
<dbReference type="SMART" id="SM01403">
    <property type="entry name" value="Ribosomal_S10"/>
    <property type="match status" value="1"/>
</dbReference>
<dbReference type="SUPFAM" id="SSF54999">
    <property type="entry name" value="Ribosomal protein S10"/>
    <property type="match status" value="1"/>
</dbReference>
<sequence>MKIHEQNKIRIKLQAYNHTLLDMSCKTIIDTAHRTKVQAKGPITLPAKRKIYCILRSPHVDKDSREHFEIRSYKKIIDIYEPSSQTIDSLMKLNIPSGVDIEIKL</sequence>